<reference key="1">
    <citation type="submission" date="2003-01" db="EMBL/GenBank/DDBJ databases">
        <authorList>
            <consortium name="NIH - Zebrafish Gene Collection (ZGC) project"/>
        </authorList>
    </citation>
    <scope>NUCLEOTIDE SEQUENCE [LARGE SCALE MRNA]</scope>
    <source>
        <strain>AB</strain>
    </source>
</reference>
<sequence length="469" mass="51205">MASSDRGSEEVDGDSCGSSPELDRNPSPPPEEDETEATEEADAIGQTIYSKHWLFSTLTRLIQMVSDQECGPSDSSTELTDDLEEDLCKVWDMAMDKDVAIFLQEFKAPDILLGVIAKSHNPRLTEICVGILGNMACFHDTCVSLSQNSDLGAVLLLLLGDNDPPTLLETCRLLLTCLSQADVAPVWLERIRQQSAVCSSLCFIMSSSTNVDLLVKVGELLDKLFDEDEELMKSWVSTSHSGTDLQTDNQPDILSSLLEAAKQLRSESPEALEVYLHSLQLLTTVEEGMQALVSDESCGSAVWTFVCELLCEDFCQPDDPPLILQEQKALLAPALALLSALHSSLHTHISAELLGSLIRILQFNAENHQSHTAGNSEESHRDDDEQLKALVETTAEFLSDVLLELQKDVLLSVVRSGHLSEKSCVSAVSCLLPQHTAAVQHLVSLLSDVNPILSDIIKKDFSISSNKSS</sequence>
<evidence type="ECO:0000250" key="1">
    <source>
        <dbReference type="UniProtKB" id="Q96ER3"/>
    </source>
</evidence>
<evidence type="ECO:0000256" key="2">
    <source>
        <dbReference type="SAM" id="MobiDB-lite"/>
    </source>
</evidence>
<evidence type="ECO:0000305" key="3"/>
<name>SAAL1_DANRE</name>
<proteinExistence type="evidence at transcript level"/>
<accession>Q803M5</accession>
<comment type="function">
    <text evidence="1">Plays a role in promoting cell proliferation in response to pro-inflammatory stimuli.</text>
</comment>
<comment type="subcellular location">
    <subcellularLocation>
        <location evidence="1">Nucleus</location>
    </subcellularLocation>
</comment>
<comment type="similarity">
    <text evidence="3">Belongs to the SAAL1 family.</text>
</comment>
<comment type="sequence caution" evidence="3">
    <conflict type="erroneous termination">
        <sequence resource="EMBL-CDS" id="AAH44415"/>
    </conflict>
    <text>Truncated C-terminus.</text>
</comment>
<gene>
    <name type="primary">saal1</name>
    <name type="ORF">zgc:55505</name>
</gene>
<organism>
    <name type="scientific">Danio rerio</name>
    <name type="common">Zebrafish</name>
    <name type="synonym">Brachydanio rerio</name>
    <dbReference type="NCBI Taxonomy" id="7955"/>
    <lineage>
        <taxon>Eukaryota</taxon>
        <taxon>Metazoa</taxon>
        <taxon>Chordata</taxon>
        <taxon>Craniata</taxon>
        <taxon>Vertebrata</taxon>
        <taxon>Euteleostomi</taxon>
        <taxon>Actinopterygii</taxon>
        <taxon>Neopterygii</taxon>
        <taxon>Teleostei</taxon>
        <taxon>Ostariophysi</taxon>
        <taxon>Cypriniformes</taxon>
        <taxon>Danionidae</taxon>
        <taxon>Danioninae</taxon>
        <taxon>Danio</taxon>
    </lineage>
</organism>
<keyword id="KW-0539">Nucleus</keyword>
<keyword id="KW-1185">Reference proteome</keyword>
<dbReference type="EMBL" id="BC044415">
    <property type="protein sequence ID" value="AAH44415.1"/>
    <property type="status" value="ALT_SEQ"/>
    <property type="molecule type" value="mRNA"/>
</dbReference>
<dbReference type="RefSeq" id="NP_956429.2">
    <property type="nucleotide sequence ID" value="NM_200135.2"/>
</dbReference>
<dbReference type="SMR" id="Q803M5"/>
<dbReference type="FunCoup" id="Q803M5">
    <property type="interactions" value="1719"/>
</dbReference>
<dbReference type="STRING" id="7955.ENSDARP00000011636"/>
<dbReference type="PaxDb" id="7955-ENSDARP00000011636"/>
<dbReference type="Ensembl" id="ENSDART00000006579">
    <property type="protein sequence ID" value="ENSDARP00000011636"/>
    <property type="gene ID" value="ENSDARG00000018681"/>
</dbReference>
<dbReference type="GeneID" id="393104"/>
<dbReference type="KEGG" id="dre:393104"/>
<dbReference type="AGR" id="ZFIN:ZDB-GENE-040426-725"/>
<dbReference type="CTD" id="113174"/>
<dbReference type="ZFIN" id="ZDB-GENE-040426-725">
    <property type="gene designation" value="saal1"/>
</dbReference>
<dbReference type="eggNOG" id="ENOG502QS5W">
    <property type="taxonomic scope" value="Eukaryota"/>
</dbReference>
<dbReference type="HOGENOM" id="CLU_045694_0_0_1"/>
<dbReference type="InParanoid" id="Q803M5"/>
<dbReference type="OMA" id="EMENEVC"/>
<dbReference type="OrthoDB" id="2156856at2759"/>
<dbReference type="PhylomeDB" id="Q803M5"/>
<dbReference type="TreeFam" id="TF323873"/>
<dbReference type="PRO" id="PR:Q803M5"/>
<dbReference type="Proteomes" id="UP000000437">
    <property type="component" value="Alternate scaffold 25"/>
</dbReference>
<dbReference type="Proteomes" id="UP000000437">
    <property type="component" value="Chromosome 25"/>
</dbReference>
<dbReference type="Bgee" id="ENSDARG00000018681">
    <property type="expression patterns" value="Expressed in blastula and 22 other cell types or tissues"/>
</dbReference>
<dbReference type="GO" id="GO:0005654">
    <property type="term" value="C:nucleoplasm"/>
    <property type="evidence" value="ECO:0000318"/>
    <property type="project" value="GO_Central"/>
</dbReference>
<dbReference type="GO" id="GO:1901647">
    <property type="term" value="P:positive regulation of synoviocyte proliferation"/>
    <property type="evidence" value="ECO:0000318"/>
    <property type="project" value="GO_Central"/>
</dbReference>
<dbReference type="Gene3D" id="1.25.10.10">
    <property type="entry name" value="Leucine-rich Repeat Variant"/>
    <property type="match status" value="1"/>
</dbReference>
<dbReference type="InterPro" id="IPR011989">
    <property type="entry name" value="ARM-like"/>
</dbReference>
<dbReference type="InterPro" id="IPR016024">
    <property type="entry name" value="ARM-type_fold"/>
</dbReference>
<dbReference type="InterPro" id="IPR052464">
    <property type="entry name" value="Synovial_Prolif_Regulator"/>
</dbReference>
<dbReference type="PANTHER" id="PTHR23424:SF23">
    <property type="entry name" value="PROTEIN SAAL1"/>
    <property type="match status" value="1"/>
</dbReference>
<dbReference type="PANTHER" id="PTHR23424">
    <property type="entry name" value="SERUM AMYLOID A"/>
    <property type="match status" value="1"/>
</dbReference>
<dbReference type="SUPFAM" id="SSF48371">
    <property type="entry name" value="ARM repeat"/>
    <property type="match status" value="1"/>
</dbReference>
<protein>
    <recommendedName>
        <fullName>Protein saal1</fullName>
    </recommendedName>
</protein>
<feature type="chain" id="PRO_0000279542" description="Protein saal1">
    <location>
        <begin position="1"/>
        <end position="469"/>
    </location>
</feature>
<feature type="region of interest" description="Disordered" evidence="2">
    <location>
        <begin position="1"/>
        <end position="39"/>
    </location>
</feature>
<feature type="compositionally biased region" description="Acidic residues" evidence="2">
    <location>
        <begin position="30"/>
        <end position="39"/>
    </location>
</feature>